<organism>
    <name type="scientific">Buchnera aphidicola subsp. Acyrthosiphon pisum (strain APS)</name>
    <name type="common">Acyrthosiphon pisum symbiotic bacterium</name>
    <dbReference type="NCBI Taxonomy" id="107806"/>
    <lineage>
        <taxon>Bacteria</taxon>
        <taxon>Pseudomonadati</taxon>
        <taxon>Pseudomonadota</taxon>
        <taxon>Gammaproteobacteria</taxon>
        <taxon>Enterobacterales</taxon>
        <taxon>Erwiniaceae</taxon>
        <taxon>Buchnera</taxon>
    </lineage>
</organism>
<reference key="1">
    <citation type="journal article" date="1998" name="FEMS Microbiol. Lett.">
        <title>Structure and evolution of the leucine plasmids carried by the endosymbiont (Buchnera aphidicola) from aphids of the family Aphididae.</title>
        <authorList>
            <person name="Silva F.J."/>
            <person name="van Ham R.C.H.J."/>
            <person name="Sabater B."/>
            <person name="Latorre A."/>
        </authorList>
    </citation>
    <scope>NUCLEOTIDE SEQUENCE [GENOMIC DNA]</scope>
</reference>
<reference key="2">
    <citation type="journal article" date="2000" name="Nature">
        <title>Genome sequence of the endocellular bacterial symbiont of aphids Buchnera sp. APS.</title>
        <authorList>
            <person name="Shigenobu S."/>
            <person name="Watanabe H."/>
            <person name="Hattori M."/>
            <person name="Sakaki Y."/>
            <person name="Ishikawa H."/>
        </authorList>
    </citation>
    <scope>NUCLEOTIDE SEQUENCE [LARGE SCALE GENOMIC DNA]</scope>
    <source>
        <strain>APS</strain>
    </source>
</reference>
<reference key="3">
    <citation type="journal article" date="2001" name="J. Bacteriol.">
        <title>Vertical transmission of biosynthetic plasmids in aphid endosymbionts (Buchnera).</title>
        <authorList>
            <person name="Wernegreen J.J."/>
            <person name="Moran N.A."/>
        </authorList>
    </citation>
    <scope>NUCLEOTIDE SEQUENCE [GENOMIC DNA] OF 14-519</scope>
</reference>
<feature type="chain" id="PRO_0000140334" description="2-isopropylmalate synthase">
    <location>
        <begin position="1"/>
        <end position="519"/>
    </location>
</feature>
<feature type="domain" description="Pyruvate carboxyltransferase" evidence="1">
    <location>
        <begin position="5"/>
        <end position="267"/>
    </location>
</feature>
<feature type="region of interest" description="Regulatory domain" evidence="1">
    <location>
        <begin position="392"/>
        <end position="519"/>
    </location>
</feature>
<feature type="binding site" evidence="1">
    <location>
        <position position="14"/>
    </location>
    <ligand>
        <name>Mn(2+)</name>
        <dbReference type="ChEBI" id="CHEBI:29035"/>
    </ligand>
</feature>
<feature type="binding site" evidence="1">
    <location>
        <position position="202"/>
    </location>
    <ligand>
        <name>Mn(2+)</name>
        <dbReference type="ChEBI" id="CHEBI:29035"/>
    </ligand>
</feature>
<feature type="binding site" evidence="1">
    <location>
        <position position="204"/>
    </location>
    <ligand>
        <name>Mn(2+)</name>
        <dbReference type="ChEBI" id="CHEBI:29035"/>
    </ligand>
</feature>
<feature type="binding site" evidence="1">
    <location>
        <position position="238"/>
    </location>
    <ligand>
        <name>Mn(2+)</name>
        <dbReference type="ChEBI" id="CHEBI:29035"/>
    </ligand>
</feature>
<feature type="sequence conflict" description="In Ref. 1; CAA07305." evidence="2" ref="1">
    <original>F</original>
    <variation>L</variation>
    <location>
        <position position="188"/>
    </location>
</feature>
<feature type="sequence conflict" description="In Ref. 1; CAA07305 and 3; AAG31404." evidence="2" ref="1 3">
    <original>T</original>
    <variation>I</variation>
    <location>
        <position position="358"/>
    </location>
</feature>
<protein>
    <recommendedName>
        <fullName evidence="1">2-isopropylmalate synthase</fullName>
        <ecNumber evidence="1">2.3.3.13</ecNumber>
    </recommendedName>
    <alternativeName>
        <fullName evidence="1">Alpha-IPM synthase</fullName>
    </alternativeName>
    <alternativeName>
        <fullName evidence="1">Alpha-isopropylmalate synthase</fullName>
    </alternativeName>
</protein>
<comment type="function">
    <text evidence="1">Catalyzes the condensation of the acetyl group of acetyl-CoA with 3-methyl-2-oxobutanoate (2-ketoisovalerate) to form 3-carboxy-3-hydroxy-4-methylpentanoate (2-isopropylmalate).</text>
</comment>
<comment type="catalytic activity">
    <reaction evidence="1">
        <text>3-methyl-2-oxobutanoate + acetyl-CoA + H2O = (2S)-2-isopropylmalate + CoA + H(+)</text>
        <dbReference type="Rhea" id="RHEA:21524"/>
        <dbReference type="ChEBI" id="CHEBI:1178"/>
        <dbReference type="ChEBI" id="CHEBI:11851"/>
        <dbReference type="ChEBI" id="CHEBI:15377"/>
        <dbReference type="ChEBI" id="CHEBI:15378"/>
        <dbReference type="ChEBI" id="CHEBI:57287"/>
        <dbReference type="ChEBI" id="CHEBI:57288"/>
        <dbReference type="EC" id="2.3.3.13"/>
    </reaction>
</comment>
<comment type="cofactor">
    <cofactor evidence="1">
        <name>Mn(2+)</name>
        <dbReference type="ChEBI" id="CHEBI:29035"/>
    </cofactor>
</comment>
<comment type="pathway">
    <text evidence="1">Amino-acid biosynthesis; L-leucine biosynthesis; L-leucine from 3-methyl-2-oxobutanoate: step 1/4.</text>
</comment>
<comment type="subunit">
    <text evidence="1">Homodimer.</text>
</comment>
<comment type="subcellular location">
    <subcellularLocation>
        <location evidence="1">Cytoplasm</location>
    </subcellularLocation>
</comment>
<comment type="similarity">
    <text evidence="1 2">Belongs to the alpha-IPM synthase/homocitrate synthase family. LeuA type 1 subfamily.</text>
</comment>
<sequence length="519" mass="57592">MKSKVVIFDTTLRDGEQALQASLSVKEKLQIALSLEKCGIDILEIGFPVSSPGDFKSVQTISKNIKNSRICSLARCIEKDIDAAGEAMSSSDSFRIHIFLATSTLHMESKLKKNFNEIIDMAVFSVKKALRYTDDIEFSCEDATRTTMDNLCRIVETLIKSGVKTINIPDTVGYTVPNELSCIIKNLFERVPNIHKSIISVHCHDDLGMAVGNSISAIQAGARQIEGTINGIGERAGNTALEEIIMAIKVREDILSVSTNINYKEIYRTSKIVSQICNMPIPSNKAIVGSNAFAHSSGIHQDGVLKNRKNYEIMEPSSIGLKEVKLNLTSRSGRAAVKHYMDEMGYNNSDYNIDELYTAFLKLADKKGQVFDYDLEALAFINKQQDEWEYFSLKFFSVQSISNSLSTASVKLLCGKKTYTESSTTSNGPVDAIYQALNRIACFPIILQKFQLVAKGKGKDALGQVDILVEHKKRKFHGVGLATDIIEASAQAMINVLNNIWKAKQVNKKLKILKDFKKK</sequence>
<proteinExistence type="inferred from homology"/>
<gene>
    <name evidence="1" type="primary">leuA</name>
    <name type="ordered locus">BUpL04</name>
</gene>
<evidence type="ECO:0000255" key="1">
    <source>
        <dbReference type="HAMAP-Rule" id="MF_01025"/>
    </source>
</evidence>
<evidence type="ECO:0000305" key="2"/>
<geneLocation type="plasmid">
    <name>pLeu</name>
    <name>pBAp1</name>
</geneLocation>
<accession>Q9ZEY8</accession>
<accession>Q9EVG1</accession>
<accession>Q9KGQ0</accession>
<dbReference type="EC" id="2.3.3.13" evidence="1"/>
<dbReference type="EMBL" id="AJ006878">
    <property type="protein sequence ID" value="CAA07305.2"/>
    <property type="molecule type" value="Genomic_DNA"/>
</dbReference>
<dbReference type="EMBL" id="AP001071">
    <property type="protein sequence ID" value="BAA95423.1"/>
    <property type="molecule type" value="Genomic_DNA"/>
</dbReference>
<dbReference type="EMBL" id="AF197457">
    <property type="protein sequence ID" value="AAG31404.1"/>
    <property type="molecule type" value="Genomic_DNA"/>
</dbReference>
<dbReference type="RefSeq" id="NP_057968.1">
    <property type="nucleotide sequence ID" value="NC_002253.1"/>
</dbReference>
<dbReference type="RefSeq" id="WP_010892294.1">
    <property type="nucleotide sequence ID" value="NC_002253.1"/>
</dbReference>
<dbReference type="SMR" id="Q9ZEY8"/>
<dbReference type="EnsemblBacteria" id="BAA95423">
    <property type="protein sequence ID" value="BAA95423"/>
    <property type="gene ID" value="BAA95423"/>
</dbReference>
<dbReference type="KEGG" id="buc:BUpL04"/>
<dbReference type="PATRIC" id="fig|107806.10.peg.10"/>
<dbReference type="HOGENOM" id="CLU_022158_0_1_6"/>
<dbReference type="UniPathway" id="UPA00048">
    <property type="reaction ID" value="UER00070"/>
</dbReference>
<dbReference type="Proteomes" id="UP000001806">
    <property type="component" value="Plasmid pLeu"/>
</dbReference>
<dbReference type="GO" id="GO:0005829">
    <property type="term" value="C:cytosol"/>
    <property type="evidence" value="ECO:0007669"/>
    <property type="project" value="TreeGrafter"/>
</dbReference>
<dbReference type="GO" id="GO:0003852">
    <property type="term" value="F:2-isopropylmalate synthase activity"/>
    <property type="evidence" value="ECO:0007669"/>
    <property type="project" value="UniProtKB-UniRule"/>
</dbReference>
<dbReference type="GO" id="GO:0003985">
    <property type="term" value="F:acetyl-CoA C-acetyltransferase activity"/>
    <property type="evidence" value="ECO:0007669"/>
    <property type="project" value="UniProtKB-UniRule"/>
</dbReference>
<dbReference type="GO" id="GO:0030145">
    <property type="term" value="F:manganese ion binding"/>
    <property type="evidence" value="ECO:0007669"/>
    <property type="project" value="UniProtKB-UniRule"/>
</dbReference>
<dbReference type="GO" id="GO:0009098">
    <property type="term" value="P:L-leucine biosynthetic process"/>
    <property type="evidence" value="ECO:0007669"/>
    <property type="project" value="UniProtKB-UniRule"/>
</dbReference>
<dbReference type="CDD" id="cd07940">
    <property type="entry name" value="DRE_TIM_IPMS"/>
    <property type="match status" value="1"/>
</dbReference>
<dbReference type="FunFam" id="1.10.238.260:FF:000001">
    <property type="entry name" value="2-isopropylmalate synthase"/>
    <property type="match status" value="1"/>
</dbReference>
<dbReference type="FunFam" id="3.20.20.70:FF:000010">
    <property type="entry name" value="2-isopropylmalate synthase"/>
    <property type="match status" value="1"/>
</dbReference>
<dbReference type="FunFam" id="3.30.160.270:FF:000001">
    <property type="entry name" value="2-isopropylmalate synthase"/>
    <property type="match status" value="1"/>
</dbReference>
<dbReference type="Gene3D" id="1.10.238.260">
    <property type="match status" value="1"/>
</dbReference>
<dbReference type="Gene3D" id="3.30.160.270">
    <property type="match status" value="1"/>
</dbReference>
<dbReference type="Gene3D" id="3.20.20.70">
    <property type="entry name" value="Aldolase class I"/>
    <property type="match status" value="1"/>
</dbReference>
<dbReference type="HAMAP" id="MF_01025">
    <property type="entry name" value="LeuA_type1"/>
    <property type="match status" value="1"/>
</dbReference>
<dbReference type="InterPro" id="IPR050073">
    <property type="entry name" value="2-IPM_HCS-like"/>
</dbReference>
<dbReference type="InterPro" id="IPR013709">
    <property type="entry name" value="2-isopropylmalate_synth_dimer"/>
</dbReference>
<dbReference type="InterPro" id="IPR002034">
    <property type="entry name" value="AIPM/Hcit_synth_CS"/>
</dbReference>
<dbReference type="InterPro" id="IPR013785">
    <property type="entry name" value="Aldolase_TIM"/>
</dbReference>
<dbReference type="InterPro" id="IPR054691">
    <property type="entry name" value="LeuA/HCS_post-cat"/>
</dbReference>
<dbReference type="InterPro" id="IPR036230">
    <property type="entry name" value="LeuA_allosteric_dom_sf"/>
</dbReference>
<dbReference type="InterPro" id="IPR005671">
    <property type="entry name" value="LeuA_bact_synth"/>
</dbReference>
<dbReference type="InterPro" id="IPR000891">
    <property type="entry name" value="PYR_CT"/>
</dbReference>
<dbReference type="NCBIfam" id="TIGR00973">
    <property type="entry name" value="leuA_bact"/>
    <property type="match status" value="1"/>
</dbReference>
<dbReference type="NCBIfam" id="NF002084">
    <property type="entry name" value="PRK00915.1-1"/>
    <property type="match status" value="1"/>
</dbReference>
<dbReference type="NCBIfam" id="NF002086">
    <property type="entry name" value="PRK00915.1-3"/>
    <property type="match status" value="1"/>
</dbReference>
<dbReference type="PANTHER" id="PTHR10277:SF9">
    <property type="entry name" value="2-ISOPROPYLMALATE SYNTHASE 1, CHLOROPLASTIC-RELATED"/>
    <property type="match status" value="1"/>
</dbReference>
<dbReference type="PANTHER" id="PTHR10277">
    <property type="entry name" value="HOMOCITRATE SYNTHASE-RELATED"/>
    <property type="match status" value="1"/>
</dbReference>
<dbReference type="Pfam" id="PF22617">
    <property type="entry name" value="HCS_D2"/>
    <property type="match status" value="1"/>
</dbReference>
<dbReference type="Pfam" id="PF00682">
    <property type="entry name" value="HMGL-like"/>
    <property type="match status" value="1"/>
</dbReference>
<dbReference type="Pfam" id="PF08502">
    <property type="entry name" value="LeuA_dimer"/>
    <property type="match status" value="1"/>
</dbReference>
<dbReference type="SMART" id="SM00917">
    <property type="entry name" value="LeuA_dimer"/>
    <property type="match status" value="1"/>
</dbReference>
<dbReference type="SUPFAM" id="SSF110921">
    <property type="entry name" value="2-isopropylmalate synthase LeuA, allosteric (dimerisation) domain"/>
    <property type="match status" value="1"/>
</dbReference>
<dbReference type="SUPFAM" id="SSF51569">
    <property type="entry name" value="Aldolase"/>
    <property type="match status" value="1"/>
</dbReference>
<dbReference type="PROSITE" id="PS00815">
    <property type="entry name" value="AIPM_HOMOCIT_SYNTH_1"/>
    <property type="match status" value="1"/>
</dbReference>
<dbReference type="PROSITE" id="PS00816">
    <property type="entry name" value="AIPM_HOMOCIT_SYNTH_2"/>
    <property type="match status" value="1"/>
</dbReference>
<dbReference type="PROSITE" id="PS50991">
    <property type="entry name" value="PYR_CT"/>
    <property type="match status" value="1"/>
</dbReference>
<name>LEU1_BUCAI</name>
<keyword id="KW-0028">Amino-acid biosynthesis</keyword>
<keyword id="KW-0100">Branched-chain amino acid biosynthesis</keyword>
<keyword id="KW-0963">Cytoplasm</keyword>
<keyword id="KW-0432">Leucine biosynthesis</keyword>
<keyword id="KW-0464">Manganese</keyword>
<keyword id="KW-0479">Metal-binding</keyword>
<keyword id="KW-0614">Plasmid</keyword>
<keyword id="KW-1185">Reference proteome</keyword>
<keyword id="KW-0808">Transferase</keyword>